<keyword id="KW-0479">Metal-binding</keyword>
<keyword id="KW-0496">Mitochondrion</keyword>
<keyword id="KW-0520">NAD</keyword>
<keyword id="KW-1185">Reference proteome</keyword>
<keyword id="KW-0808">Transferase</keyword>
<keyword id="KW-0809">Transit peptide</keyword>
<keyword id="KW-0862">Zinc</keyword>
<dbReference type="EC" id="2.3.1.286" evidence="1 2"/>
<dbReference type="EMBL" id="CH991547">
    <property type="protein sequence ID" value="EDQ90654.1"/>
    <property type="molecule type" value="Genomic_DNA"/>
</dbReference>
<dbReference type="RefSeq" id="XP_001744705.1">
    <property type="nucleotide sequence ID" value="XM_001744653.1"/>
</dbReference>
<dbReference type="SMR" id="A9UVV1"/>
<dbReference type="FunCoup" id="A9UVV1">
    <property type="interactions" value="622"/>
</dbReference>
<dbReference type="STRING" id="81824.A9UVV1"/>
<dbReference type="EnsemblProtists" id="EDQ90654">
    <property type="protein sequence ID" value="EDQ90654"/>
    <property type="gene ID" value="MONBRDRAFT_15984"/>
</dbReference>
<dbReference type="KEGG" id="mbr:MONBRDRAFT_15984"/>
<dbReference type="eggNOG" id="KOG2683">
    <property type="taxonomic scope" value="Eukaryota"/>
</dbReference>
<dbReference type="InParanoid" id="A9UVV1"/>
<dbReference type="OMA" id="RRHYWAR"/>
<dbReference type="Proteomes" id="UP000001357">
    <property type="component" value="Unassembled WGS sequence"/>
</dbReference>
<dbReference type="GO" id="GO:0005759">
    <property type="term" value="C:mitochondrial matrix"/>
    <property type="evidence" value="ECO:0007669"/>
    <property type="project" value="UniProtKB-SubCell"/>
</dbReference>
<dbReference type="GO" id="GO:0017136">
    <property type="term" value="F:histone deacetylase activity, NAD-dependent"/>
    <property type="evidence" value="ECO:0000318"/>
    <property type="project" value="GO_Central"/>
</dbReference>
<dbReference type="GO" id="GO:0070403">
    <property type="term" value="F:NAD+ binding"/>
    <property type="evidence" value="ECO:0000318"/>
    <property type="project" value="GO_Central"/>
</dbReference>
<dbReference type="GO" id="GO:0008270">
    <property type="term" value="F:zinc ion binding"/>
    <property type="evidence" value="ECO:0007669"/>
    <property type="project" value="UniProtKB-UniRule"/>
</dbReference>
<dbReference type="Gene3D" id="3.30.1600.10">
    <property type="entry name" value="SIR2/SIRT2 'Small Domain"/>
    <property type="match status" value="1"/>
</dbReference>
<dbReference type="Gene3D" id="3.40.50.1220">
    <property type="entry name" value="TPP-binding domain"/>
    <property type="match status" value="1"/>
</dbReference>
<dbReference type="HAMAP" id="MF_01967">
    <property type="entry name" value="Sirtuin_ClassII"/>
    <property type="match status" value="1"/>
</dbReference>
<dbReference type="InterPro" id="IPR029035">
    <property type="entry name" value="DHS-like_NAD/FAD-binding_dom"/>
</dbReference>
<dbReference type="InterPro" id="IPR050134">
    <property type="entry name" value="NAD-dep_sirtuin_deacylases"/>
</dbReference>
<dbReference type="InterPro" id="IPR003000">
    <property type="entry name" value="Sirtuin"/>
</dbReference>
<dbReference type="InterPro" id="IPR026591">
    <property type="entry name" value="Sirtuin_cat_small_dom_sf"/>
</dbReference>
<dbReference type="InterPro" id="IPR026587">
    <property type="entry name" value="Sirtuin_class_II"/>
</dbReference>
<dbReference type="InterPro" id="IPR026590">
    <property type="entry name" value="Ssirtuin_cat_dom"/>
</dbReference>
<dbReference type="PANTHER" id="PTHR11085">
    <property type="entry name" value="NAD-DEPENDENT PROTEIN DEACYLASE SIRTUIN-5, MITOCHONDRIAL-RELATED"/>
    <property type="match status" value="1"/>
</dbReference>
<dbReference type="PANTHER" id="PTHR11085:SF10">
    <property type="entry name" value="NAD-DEPENDENT PROTEIN DEACYLASE SIRTUIN-5, MITOCHONDRIAL-RELATED"/>
    <property type="match status" value="1"/>
</dbReference>
<dbReference type="Pfam" id="PF02146">
    <property type="entry name" value="SIR2"/>
    <property type="match status" value="1"/>
</dbReference>
<dbReference type="SUPFAM" id="SSF52467">
    <property type="entry name" value="DHS-like NAD/FAD-binding domain"/>
    <property type="match status" value="1"/>
</dbReference>
<dbReference type="PROSITE" id="PS50305">
    <property type="entry name" value="SIRTUIN"/>
    <property type="match status" value="1"/>
</dbReference>
<name>SIR4_MONBE</name>
<evidence type="ECO:0000255" key="1">
    <source>
        <dbReference type="HAMAP-Rule" id="MF_03161"/>
    </source>
</evidence>
<evidence type="ECO:0000255" key="2">
    <source>
        <dbReference type="PROSITE-ProRule" id="PRU00236"/>
    </source>
</evidence>
<proteinExistence type="inferred from homology"/>
<comment type="function">
    <text evidence="1">NAD-dependent protein deacylase. Catalyzes the NAD-dependent hydrolysis of acyl groups from lysine residues.</text>
</comment>
<comment type="catalytic activity">
    <reaction evidence="1">
        <text>N(6)-acetyl-L-lysyl-[protein] + NAD(+) + H2O = 2''-O-acetyl-ADP-D-ribose + nicotinamide + L-lysyl-[protein]</text>
        <dbReference type="Rhea" id="RHEA:43636"/>
        <dbReference type="Rhea" id="RHEA-COMP:9752"/>
        <dbReference type="Rhea" id="RHEA-COMP:10731"/>
        <dbReference type="ChEBI" id="CHEBI:15377"/>
        <dbReference type="ChEBI" id="CHEBI:17154"/>
        <dbReference type="ChEBI" id="CHEBI:29969"/>
        <dbReference type="ChEBI" id="CHEBI:57540"/>
        <dbReference type="ChEBI" id="CHEBI:61930"/>
        <dbReference type="ChEBI" id="CHEBI:83767"/>
        <dbReference type="EC" id="2.3.1.286"/>
    </reaction>
</comment>
<comment type="cofactor">
    <cofactor evidence="1">
        <name>Zn(2+)</name>
        <dbReference type="ChEBI" id="CHEBI:29105"/>
    </cofactor>
    <text evidence="1">Binds 1 zinc ion per subunit.</text>
</comment>
<comment type="subcellular location">
    <subcellularLocation>
        <location evidence="1">Mitochondrion matrix</location>
    </subcellularLocation>
</comment>
<comment type="similarity">
    <text evidence="1">Belongs to the sirtuin family. Class II subfamily.</text>
</comment>
<sequence length="308" mass="33579">MAATKLHPALRNAIRAGANLPTEVISATFDVQEGIKLLSAFLLRHEPVCVLTGAGISTDSGIPDYRSPGRPPHRPLQHLEFLGSHERQQRYWARSLYGYPRIRDTMPNVGHQAINELQRRGLVGAIITQNVDGLHQRAGSQHVIDLHGRLDQVKCMNCHSITTRDELQSRLLADNKALLDQFSVVHDEAVRPDGDAVLDEDLYGRFTVAACASCGGVLKPNVVFFGGSLDPEDVKRASTAVSEASALFVVGTSLATWSAFRIVRQAVEEAKPVCVLNSGPTRADGVIPEYLRLCMPIGEVLPAALRQL</sequence>
<protein>
    <recommendedName>
        <fullName evidence="1">NAD-dependent protein deacylase SIR4</fullName>
        <ecNumber evidence="1 2">2.3.1.286</ecNumber>
    </recommendedName>
    <alternativeName>
        <fullName evidence="1">Regulatory protein SIR2 homolog 4</fullName>
    </alternativeName>
</protein>
<reference key="1">
    <citation type="journal article" date="2008" name="Nature">
        <title>The genome of the choanoflagellate Monosiga brevicollis and the origin of metazoans.</title>
        <authorList>
            <consortium name="JGI Sequencing"/>
            <person name="King N."/>
            <person name="Westbrook M.J."/>
            <person name="Young S.L."/>
            <person name="Kuo A."/>
            <person name="Abedin M."/>
            <person name="Chapman J."/>
            <person name="Fairclough S."/>
            <person name="Hellsten U."/>
            <person name="Isogai Y."/>
            <person name="Letunic I."/>
            <person name="Marr M."/>
            <person name="Pincus D."/>
            <person name="Putnam N."/>
            <person name="Rokas A."/>
            <person name="Wright K.J."/>
            <person name="Zuzow R."/>
            <person name="Dirks W."/>
            <person name="Good M."/>
            <person name="Goodstein D."/>
            <person name="Lemons D."/>
            <person name="Li W."/>
            <person name="Lyons J.B."/>
            <person name="Morris A."/>
            <person name="Nichols S."/>
            <person name="Richter D.J."/>
            <person name="Salamov A."/>
            <person name="Bork P."/>
            <person name="Lim W.A."/>
            <person name="Manning G."/>
            <person name="Miller W.T."/>
            <person name="McGinnis W."/>
            <person name="Shapiro H."/>
            <person name="Tjian R."/>
            <person name="Grigoriev I.V."/>
            <person name="Rokhsar D."/>
        </authorList>
    </citation>
    <scope>NUCLEOTIDE SEQUENCE [LARGE SCALE GENOMIC DNA]</scope>
    <source>
        <strain>MX1 / ATCC 50154</strain>
    </source>
</reference>
<gene>
    <name type="ORF">15984</name>
</gene>
<organism>
    <name type="scientific">Monosiga brevicollis</name>
    <name type="common">Choanoflagellate</name>
    <dbReference type="NCBI Taxonomy" id="81824"/>
    <lineage>
        <taxon>Eukaryota</taxon>
        <taxon>Choanoflagellata</taxon>
        <taxon>Craspedida</taxon>
        <taxon>Salpingoecidae</taxon>
        <taxon>Monosiga</taxon>
    </lineage>
</organism>
<feature type="transit peptide" description="Mitochondrion" evidence="1">
    <location>
        <begin position="1"/>
        <end position="16"/>
    </location>
</feature>
<feature type="chain" id="PRO_0000417352" description="NAD-dependent protein deacylase SIR4">
    <location>
        <begin position="17"/>
        <end position="308"/>
    </location>
</feature>
<feature type="domain" description="Deacetylase sirtuin-type" evidence="2">
    <location>
        <begin position="28"/>
        <end position="308"/>
    </location>
</feature>
<feature type="active site" description="Proton acceptor" evidence="2">
    <location>
        <position position="147"/>
    </location>
</feature>
<feature type="binding site" evidence="1">
    <location>
        <begin position="53"/>
        <end position="73"/>
    </location>
    <ligand>
        <name>NAD(+)</name>
        <dbReference type="ChEBI" id="CHEBI:57540"/>
    </ligand>
</feature>
<feature type="binding site" evidence="1">
    <location>
        <begin position="129"/>
        <end position="132"/>
    </location>
    <ligand>
        <name>NAD(+)</name>
        <dbReference type="ChEBI" id="CHEBI:57540"/>
    </ligand>
</feature>
<feature type="binding site" evidence="1">
    <location>
        <position position="155"/>
    </location>
    <ligand>
        <name>Zn(2+)</name>
        <dbReference type="ChEBI" id="CHEBI:29105"/>
    </ligand>
</feature>
<feature type="binding site" evidence="1">
    <location>
        <position position="158"/>
    </location>
    <ligand>
        <name>Zn(2+)</name>
        <dbReference type="ChEBI" id="CHEBI:29105"/>
    </ligand>
</feature>
<feature type="binding site" evidence="1">
    <location>
        <position position="211"/>
    </location>
    <ligand>
        <name>Zn(2+)</name>
        <dbReference type="ChEBI" id="CHEBI:29105"/>
    </ligand>
</feature>
<feature type="binding site" evidence="1">
    <location>
        <position position="214"/>
    </location>
    <ligand>
        <name>Zn(2+)</name>
        <dbReference type="ChEBI" id="CHEBI:29105"/>
    </ligand>
</feature>
<feature type="binding site" evidence="1">
    <location>
        <begin position="251"/>
        <end position="253"/>
    </location>
    <ligand>
        <name>NAD(+)</name>
        <dbReference type="ChEBI" id="CHEBI:57540"/>
    </ligand>
</feature>
<feature type="binding site" evidence="1">
    <location>
        <begin position="277"/>
        <end position="279"/>
    </location>
    <ligand>
        <name>NAD(+)</name>
        <dbReference type="ChEBI" id="CHEBI:57540"/>
    </ligand>
</feature>
<feature type="binding site" evidence="1">
    <location>
        <position position="297"/>
    </location>
    <ligand>
        <name>NAD(+)</name>
        <dbReference type="ChEBI" id="CHEBI:57540"/>
    </ligand>
</feature>
<accession>A9UVV1</accession>